<organism>
    <name type="scientific">Enterobacter agglomerans</name>
    <name type="common">Erwinia herbicola</name>
    <name type="synonym">Pantoea agglomerans</name>
    <dbReference type="NCBI Taxonomy" id="549"/>
    <lineage>
        <taxon>Bacteria</taxon>
        <taxon>Pseudomonadati</taxon>
        <taxon>Pseudomonadota</taxon>
        <taxon>Gammaproteobacteria</taxon>
        <taxon>Enterobacterales</taxon>
        <taxon>Erwiniaceae</taxon>
        <taxon>Pantoea</taxon>
        <taxon>Pantoea agglomerans group</taxon>
    </lineage>
</organism>
<gene>
    <name type="primary">bglA</name>
</gene>
<reference key="1">
    <citation type="journal article" date="1995" name="FEMS Microbiol. Lett.">
        <title>Cloning and nucleotide sequence of the bglA gene from Erwinia herbicola and expression of beta-glucosidase activity in Escherichia coli.</title>
        <authorList>
            <person name="Marri L."/>
            <person name="Valentini S."/>
            <person name="Venditti D."/>
        </authorList>
    </citation>
    <scope>NUCLEOTIDE SEQUENCE [GENOMIC DNA]</scope>
    <source>
        <strain>WD4</strain>
    </source>
</reference>
<feature type="chain" id="PRO_0000063877" description="Beta-glucosidase A">
    <location>
        <begin position="1"/>
        <end position="480"/>
    </location>
</feature>
<feature type="active site" description="Proton donor" evidence="1">
    <location>
        <position position="177"/>
    </location>
</feature>
<feature type="active site" description="Nucleophile" evidence="2">
    <location>
        <position position="378"/>
    </location>
</feature>
<evidence type="ECO:0000255" key="1"/>
<evidence type="ECO:0000255" key="2">
    <source>
        <dbReference type="PROSITE-ProRule" id="PRU10055"/>
    </source>
</evidence>
<evidence type="ECO:0000305" key="3"/>
<protein>
    <recommendedName>
        <fullName>Beta-glucosidase A</fullName>
        <ecNumber>3.2.1.21</ecNumber>
    </recommendedName>
    <alternativeName>
        <fullName>Beta-D-glucoside glucohydrolase</fullName>
    </alternativeName>
    <alternativeName>
        <fullName>Gentiobiase</fullName>
    </alternativeName>
</protein>
<keyword id="KW-0119">Carbohydrate metabolism</keyword>
<keyword id="KW-0136">Cellulose degradation</keyword>
<keyword id="KW-0326">Glycosidase</keyword>
<keyword id="KW-0378">Hydrolase</keyword>
<keyword id="KW-0624">Polysaccharide degradation</keyword>
<sequence length="480" mass="53889">MKNGMLALGMTAADVPDNFLWGAASAAYQVEGATNKDGKGRSVWDYYLDEKHLAGPGISGALRLTFTDRDQYLKDIQLFKELGLNSYRFSHRLDTYYPDGQGPVNLRAVAHYRQFITDLEAAGIKPLVTLYHWDMPESLSAAGGWENRESVEWFQRYAEVIFANFSDQVDQFVLINEPTVEVATKIMAEKRLKGEELTLPPIVPAGSYLETSLKSYNHILLASAAAAESFKVKGYKGRLGIALPFFPVLTTENASDEDKADARLVDGILNRWFLDAMYKGNYPADVLKLAADRHLNIDVQPGDAERIHDAGLGFLGINYYAPFFIRHQKNASEVYSPEIIFPKNEKLAFNGAVRPDQFSALLERVRDEYGNPPVIITENGAGFEGEDQLTNGKVNDVNRCLYLVDHIHAMRESIARGANVQGYYVWSSHDNLEWLSGYKSRFGMIYVDYDTQKRTPKLSAEIYGKIIRGENISDVDCKSD</sequence>
<proteinExistence type="inferred from homology"/>
<comment type="catalytic activity">
    <reaction>
        <text>Hydrolysis of terminal, non-reducing beta-D-glucosyl residues with release of beta-D-glucose.</text>
        <dbReference type="EC" id="3.2.1.21"/>
    </reaction>
</comment>
<comment type="similarity">
    <text evidence="3">Belongs to the glycosyl hydrolase 1 family.</text>
</comment>
<accession>Q59437</accession>
<name>BGLA_ENTAG</name>
<dbReference type="EC" id="3.2.1.21"/>
<dbReference type="EMBL" id="X79911">
    <property type="protein sequence ID" value="CAA56282.1"/>
    <property type="molecule type" value="Genomic_DNA"/>
</dbReference>
<dbReference type="PIR" id="S49182">
    <property type="entry name" value="S49182"/>
</dbReference>
<dbReference type="SMR" id="Q59437"/>
<dbReference type="CAZy" id="GH1">
    <property type="family name" value="Glycoside Hydrolase Family 1"/>
</dbReference>
<dbReference type="GO" id="GO:0005829">
    <property type="term" value="C:cytosol"/>
    <property type="evidence" value="ECO:0007669"/>
    <property type="project" value="TreeGrafter"/>
</dbReference>
<dbReference type="GO" id="GO:0008422">
    <property type="term" value="F:beta-glucosidase activity"/>
    <property type="evidence" value="ECO:0007669"/>
    <property type="project" value="UniProtKB-EC"/>
</dbReference>
<dbReference type="GO" id="GO:0030245">
    <property type="term" value="P:cellulose catabolic process"/>
    <property type="evidence" value="ECO:0007669"/>
    <property type="project" value="UniProtKB-KW"/>
</dbReference>
<dbReference type="Gene3D" id="3.20.20.80">
    <property type="entry name" value="Glycosidases"/>
    <property type="match status" value="1"/>
</dbReference>
<dbReference type="InterPro" id="IPR001360">
    <property type="entry name" value="Glyco_hydro_1"/>
</dbReference>
<dbReference type="InterPro" id="IPR018120">
    <property type="entry name" value="Glyco_hydro_1_AS"/>
</dbReference>
<dbReference type="InterPro" id="IPR033132">
    <property type="entry name" value="Glyco_hydro_1_N_CS"/>
</dbReference>
<dbReference type="InterPro" id="IPR017853">
    <property type="entry name" value="Glycoside_hydrolase_SF"/>
</dbReference>
<dbReference type="PANTHER" id="PTHR10353">
    <property type="entry name" value="GLYCOSYL HYDROLASE"/>
    <property type="match status" value="1"/>
</dbReference>
<dbReference type="PANTHER" id="PTHR10353:SF36">
    <property type="entry name" value="LP05116P"/>
    <property type="match status" value="1"/>
</dbReference>
<dbReference type="Pfam" id="PF00232">
    <property type="entry name" value="Glyco_hydro_1"/>
    <property type="match status" value="1"/>
</dbReference>
<dbReference type="PRINTS" id="PR00131">
    <property type="entry name" value="GLHYDRLASE1"/>
</dbReference>
<dbReference type="SUPFAM" id="SSF51445">
    <property type="entry name" value="(Trans)glycosidases"/>
    <property type="match status" value="1"/>
</dbReference>
<dbReference type="PROSITE" id="PS00572">
    <property type="entry name" value="GLYCOSYL_HYDROL_F1_1"/>
    <property type="match status" value="1"/>
</dbReference>
<dbReference type="PROSITE" id="PS00653">
    <property type="entry name" value="GLYCOSYL_HYDROL_F1_2"/>
    <property type="match status" value="1"/>
</dbReference>